<comment type="subcellular location">
    <subcellularLocation>
        <location evidence="3">Membrane</location>
        <topology evidence="3">Multi-pass membrane protein</topology>
    </subcellularLocation>
</comment>
<comment type="similarity">
    <text evidence="5">Belongs to the ABC transporter superfamily. ABCB family. Mitochondrial peptide exporter (TC 3.A.1.212) subfamily.</text>
</comment>
<organism>
    <name type="scientific">Candida albicans</name>
    <name type="common">Yeast</name>
    <dbReference type="NCBI Taxonomy" id="5476"/>
    <lineage>
        <taxon>Eukaryota</taxon>
        <taxon>Fungi</taxon>
        <taxon>Dikarya</taxon>
        <taxon>Ascomycota</taxon>
        <taxon>Saccharomycotina</taxon>
        <taxon>Pichiomycetes</taxon>
        <taxon>Debaryomycetaceae</taxon>
        <taxon>Candida/Lodderomyces clade</taxon>
        <taxon>Candida</taxon>
    </lineage>
</organism>
<proteinExistence type="inferred from homology"/>
<gene>
    <name type="primary">MDL1</name>
</gene>
<keyword id="KW-0067">ATP-binding</keyword>
<keyword id="KW-0325">Glycoprotein</keyword>
<keyword id="KW-0472">Membrane</keyword>
<keyword id="KW-0547">Nucleotide-binding</keyword>
<keyword id="KW-0812">Transmembrane</keyword>
<keyword id="KW-1133">Transmembrane helix</keyword>
<keyword id="KW-0813">Transport</keyword>
<sequence length="685" mass="75868">MIGMNRLIFSKAFTSSCKSVGKVPFAKSITRANTRYFKPTSILQQIRFNSKSSTAPNTEANSNGSTNSQSDTKKPRPKLTSEIFKLLRLAKPESKLIFFALICLVTTSATSMALPLMIGKIIDTTKKDDDDDKDNDNDDKDDTQPSDKLIFGLPQPQFYSALGVLFIVSASTNFGRIYLLRSVGERLVARLRSRLFSKILAQDAYFFDLGPSKTGMKTGDLISRIASDTQIISKSLSMNISDGIRAIISGCVGLSMMCYVSWKLSLCMSLIFPPLITMSWFYGRKIKALSKLIQENIGDMTKVTEEKLNGVKVIQTFSQQQSVVHSYNQEIKNIFNSSMREAKLAGFFYSTNGFIGNVTMIGLLIMGTKLIGAGELTVGDLSSFMMYAVYTGTSVFGLGNFYTELMKGIGAAERVFELVEYQPRISNHLGKKVDELNGDIEFKGIDFTYPSRPESGIFKDLNLHIKQGENVCLVGPSGSGKSTVSQLLLRFYDPEKGTIQIGDDVITDLNLNHYRSKLGYVQQEPLLFSGTIKENILFGKEDATDEEINNALNLSYASNFVRHLPDGLDTKIGASNSTQLSGGQKQRVSLARTLIRDPKILILDEATSALDSVSEEIVMSNLIQLNKNRGVTLISIAHRLSTIKNSDRIIVFNQDGQIVEDGKFNELHNDPNSQFNKLLKSHSLE</sequence>
<name>MDL1_CANAX</name>
<feature type="chain" id="PRO_0000093440" description="ATP-dependent permease MDL1">
    <location>
        <begin position="1"/>
        <end position="685"/>
    </location>
</feature>
<feature type="transmembrane region" description="Helical" evidence="3">
    <location>
        <begin position="96"/>
        <end position="116"/>
    </location>
</feature>
<feature type="transmembrane region" description="Helical" evidence="3">
    <location>
        <begin position="158"/>
        <end position="180"/>
    </location>
</feature>
<feature type="transmembrane region" description="Helical" evidence="3">
    <location>
        <begin position="266"/>
        <end position="282"/>
    </location>
</feature>
<feature type="transmembrane region" description="Helical" evidence="3">
    <location>
        <begin position="353"/>
        <end position="373"/>
    </location>
</feature>
<feature type="transmembrane region" description="Helical" evidence="3">
    <location>
        <begin position="381"/>
        <end position="401"/>
    </location>
</feature>
<feature type="domain" description="ABC transmembrane type-1" evidence="3">
    <location>
        <begin position="97"/>
        <end position="407"/>
    </location>
</feature>
<feature type="domain" description="ABC transporter" evidence="2">
    <location>
        <begin position="440"/>
        <end position="680"/>
    </location>
</feature>
<feature type="region of interest" description="Disordered" evidence="4">
    <location>
        <begin position="48"/>
        <end position="76"/>
    </location>
</feature>
<feature type="region of interest" description="Disordered" evidence="4">
    <location>
        <begin position="125"/>
        <end position="147"/>
    </location>
</feature>
<feature type="compositionally biased region" description="Polar residues" evidence="4">
    <location>
        <begin position="48"/>
        <end position="70"/>
    </location>
</feature>
<feature type="compositionally biased region" description="Acidic residues" evidence="4">
    <location>
        <begin position="129"/>
        <end position="141"/>
    </location>
</feature>
<feature type="binding site" evidence="2">
    <location>
        <begin position="475"/>
        <end position="482"/>
    </location>
    <ligand>
        <name>ATP</name>
        <dbReference type="ChEBI" id="CHEBI:30616"/>
    </ligand>
</feature>
<feature type="glycosylation site" description="N-linked (GlcNAc...) asparagine" evidence="1">
    <location>
        <position position="63"/>
    </location>
</feature>
<feature type="glycosylation site" description="N-linked (GlcNAc...) asparagine" evidence="1">
    <location>
        <position position="239"/>
    </location>
</feature>
<feature type="glycosylation site" description="N-linked (GlcNAc...) asparagine" evidence="1">
    <location>
        <position position="336"/>
    </location>
</feature>
<feature type="glycosylation site" description="N-linked (GlcNAc...) asparagine" evidence="1">
    <location>
        <position position="553"/>
    </location>
</feature>
<feature type="glycosylation site" description="N-linked (GlcNAc...) asparagine" evidence="1">
    <location>
        <position position="576"/>
    </location>
</feature>
<accession>P97998</accession>
<dbReference type="EMBL" id="Y12327">
    <property type="protein sequence ID" value="CAA72996.1"/>
    <property type="molecule type" value="Genomic_DNA"/>
</dbReference>
<dbReference type="SMR" id="P97998"/>
<dbReference type="GlyCosmos" id="P97998">
    <property type="glycosylation" value="5 sites, No reported glycans"/>
</dbReference>
<dbReference type="VEuPathDB" id="FungiDB:CAWG_01561"/>
<dbReference type="VEuPathDB" id="FungiDB:CR_02150W_A"/>
<dbReference type="GO" id="GO:0005743">
    <property type="term" value="C:mitochondrial inner membrane"/>
    <property type="evidence" value="ECO:0007669"/>
    <property type="project" value="TreeGrafter"/>
</dbReference>
<dbReference type="GO" id="GO:0015421">
    <property type="term" value="F:ABC-type oligopeptide transporter activity"/>
    <property type="evidence" value="ECO:0007669"/>
    <property type="project" value="TreeGrafter"/>
</dbReference>
<dbReference type="GO" id="GO:0005524">
    <property type="term" value="F:ATP binding"/>
    <property type="evidence" value="ECO:0007669"/>
    <property type="project" value="UniProtKB-KW"/>
</dbReference>
<dbReference type="GO" id="GO:0016887">
    <property type="term" value="F:ATP hydrolysis activity"/>
    <property type="evidence" value="ECO:0007669"/>
    <property type="project" value="InterPro"/>
</dbReference>
<dbReference type="GO" id="GO:0090374">
    <property type="term" value="P:oligopeptide export from mitochondrion"/>
    <property type="evidence" value="ECO:0007669"/>
    <property type="project" value="TreeGrafter"/>
</dbReference>
<dbReference type="CDD" id="cd18573">
    <property type="entry name" value="ABC_6TM_ABCB10_like"/>
    <property type="match status" value="1"/>
</dbReference>
<dbReference type="FunFam" id="3.40.50.300:FF:001371">
    <property type="entry name" value="ABC transporter ATP-binding protein"/>
    <property type="match status" value="1"/>
</dbReference>
<dbReference type="Gene3D" id="1.20.1560.10">
    <property type="entry name" value="ABC transporter type 1, transmembrane domain"/>
    <property type="match status" value="1"/>
</dbReference>
<dbReference type="Gene3D" id="3.40.50.300">
    <property type="entry name" value="P-loop containing nucleotide triphosphate hydrolases"/>
    <property type="match status" value="1"/>
</dbReference>
<dbReference type="InterPro" id="IPR003593">
    <property type="entry name" value="AAA+_ATPase"/>
</dbReference>
<dbReference type="InterPro" id="IPR011527">
    <property type="entry name" value="ABC1_TM_dom"/>
</dbReference>
<dbReference type="InterPro" id="IPR036640">
    <property type="entry name" value="ABC1_TM_sf"/>
</dbReference>
<dbReference type="InterPro" id="IPR003439">
    <property type="entry name" value="ABC_transporter-like_ATP-bd"/>
</dbReference>
<dbReference type="InterPro" id="IPR017871">
    <property type="entry name" value="ABC_transporter-like_CS"/>
</dbReference>
<dbReference type="InterPro" id="IPR027417">
    <property type="entry name" value="P-loop_NTPase"/>
</dbReference>
<dbReference type="InterPro" id="IPR039421">
    <property type="entry name" value="Type_1_exporter"/>
</dbReference>
<dbReference type="PANTHER" id="PTHR43394:SF1">
    <property type="entry name" value="ATP-BINDING CASSETTE SUB-FAMILY B MEMBER 10, MITOCHONDRIAL"/>
    <property type="match status" value="1"/>
</dbReference>
<dbReference type="PANTHER" id="PTHR43394">
    <property type="entry name" value="ATP-DEPENDENT PERMEASE MDL1, MITOCHONDRIAL"/>
    <property type="match status" value="1"/>
</dbReference>
<dbReference type="Pfam" id="PF00664">
    <property type="entry name" value="ABC_membrane"/>
    <property type="match status" value="1"/>
</dbReference>
<dbReference type="Pfam" id="PF00005">
    <property type="entry name" value="ABC_tran"/>
    <property type="match status" value="1"/>
</dbReference>
<dbReference type="SMART" id="SM00382">
    <property type="entry name" value="AAA"/>
    <property type="match status" value="1"/>
</dbReference>
<dbReference type="SUPFAM" id="SSF90123">
    <property type="entry name" value="ABC transporter transmembrane region"/>
    <property type="match status" value="1"/>
</dbReference>
<dbReference type="SUPFAM" id="SSF52540">
    <property type="entry name" value="P-loop containing nucleoside triphosphate hydrolases"/>
    <property type="match status" value="1"/>
</dbReference>
<dbReference type="PROSITE" id="PS50929">
    <property type="entry name" value="ABC_TM1F"/>
    <property type="match status" value="1"/>
</dbReference>
<dbReference type="PROSITE" id="PS00211">
    <property type="entry name" value="ABC_TRANSPORTER_1"/>
    <property type="match status" value="1"/>
</dbReference>
<dbReference type="PROSITE" id="PS50893">
    <property type="entry name" value="ABC_TRANSPORTER_2"/>
    <property type="match status" value="1"/>
</dbReference>
<protein>
    <recommendedName>
        <fullName>ATP-dependent permease MDL1</fullName>
    </recommendedName>
</protein>
<evidence type="ECO:0000255" key="1"/>
<evidence type="ECO:0000255" key="2">
    <source>
        <dbReference type="PROSITE-ProRule" id="PRU00434"/>
    </source>
</evidence>
<evidence type="ECO:0000255" key="3">
    <source>
        <dbReference type="PROSITE-ProRule" id="PRU00441"/>
    </source>
</evidence>
<evidence type="ECO:0000256" key="4">
    <source>
        <dbReference type="SAM" id="MobiDB-lite"/>
    </source>
</evidence>
<evidence type="ECO:0000305" key="5"/>
<reference key="1">
    <citation type="submission" date="1997-03" db="EMBL/GenBank/DDBJ databases">
        <authorList>
            <person name="McCreath K.J."/>
        </authorList>
    </citation>
    <scope>NUCLEOTIDE SEQUENCE [GENOMIC DNA]</scope>
    <source>
        <strain>491A</strain>
    </source>
</reference>